<geneLocation type="chloroplast"/>
<name>RR15_DAUCA</name>
<evidence type="ECO:0000250" key="1"/>
<evidence type="ECO:0000305" key="2"/>
<gene>
    <name type="primary">rps15</name>
</gene>
<proteinExistence type="inferred from homology"/>
<protein>
    <recommendedName>
        <fullName evidence="2">Small ribosomal subunit protein uS15c</fullName>
    </recommendedName>
    <alternativeName>
        <fullName>30S ribosomal protein S15, chloroplastic</fullName>
    </alternativeName>
</protein>
<keyword id="KW-0150">Chloroplast</keyword>
<keyword id="KW-0934">Plastid</keyword>
<keyword id="KW-0687">Ribonucleoprotein</keyword>
<keyword id="KW-0689">Ribosomal protein</keyword>
<reference key="1">
    <citation type="journal article" date="2006" name="BMC Genomics">
        <title>Complete plastid genome sequence of Daucus carota: implications for biotechnology and phylogeny of angiosperms.</title>
        <authorList>
            <person name="Ruhlman T."/>
            <person name="Lee S.-B."/>
            <person name="Jansen R.K."/>
            <person name="Hostetler J.B."/>
            <person name="Tallon L.J."/>
            <person name="Town C.D."/>
            <person name="Daniell H."/>
        </authorList>
    </citation>
    <scope>NUCLEOTIDE SEQUENCE [LARGE SCALE GENOMIC DNA]</scope>
    <source>
        <strain>cv. Danvers Half-long</strain>
    </source>
</reference>
<sequence length="90" mass="10785">MIKNSFSAIFFKEENEDNKGSVEFQVVSFTNRIRKLTSHLELHKKDYLSQRGLRKILGKRQRLLAYLSKKNRVRYKELIGQLEIRETKKN</sequence>
<accession>Q0G9Q5</accession>
<dbReference type="EMBL" id="DQ898156">
    <property type="protein sequence ID" value="ABI32481.1"/>
    <property type="molecule type" value="Genomic_DNA"/>
</dbReference>
<dbReference type="RefSeq" id="YP_740174.1">
    <property type="nucleotide sequence ID" value="NC_008325.1"/>
</dbReference>
<dbReference type="SMR" id="Q0G9Q5"/>
<dbReference type="GeneID" id="4266817"/>
<dbReference type="OMA" id="RINYLTE"/>
<dbReference type="GO" id="GO:0009507">
    <property type="term" value="C:chloroplast"/>
    <property type="evidence" value="ECO:0007669"/>
    <property type="project" value="UniProtKB-SubCell"/>
</dbReference>
<dbReference type="GO" id="GO:1990904">
    <property type="term" value="C:ribonucleoprotein complex"/>
    <property type="evidence" value="ECO:0007669"/>
    <property type="project" value="UniProtKB-KW"/>
</dbReference>
<dbReference type="GO" id="GO:0005840">
    <property type="term" value="C:ribosome"/>
    <property type="evidence" value="ECO:0007669"/>
    <property type="project" value="UniProtKB-KW"/>
</dbReference>
<dbReference type="GO" id="GO:0003735">
    <property type="term" value="F:structural constituent of ribosome"/>
    <property type="evidence" value="ECO:0007669"/>
    <property type="project" value="InterPro"/>
</dbReference>
<dbReference type="GO" id="GO:0006412">
    <property type="term" value="P:translation"/>
    <property type="evidence" value="ECO:0007669"/>
    <property type="project" value="UniProtKB-UniRule"/>
</dbReference>
<dbReference type="CDD" id="cd00353">
    <property type="entry name" value="Ribosomal_S15p_S13e"/>
    <property type="match status" value="1"/>
</dbReference>
<dbReference type="Gene3D" id="1.10.287.10">
    <property type="entry name" value="S15/NS1, RNA-binding"/>
    <property type="match status" value="1"/>
</dbReference>
<dbReference type="HAMAP" id="MF_01343_B">
    <property type="entry name" value="Ribosomal_uS15_B"/>
    <property type="match status" value="1"/>
</dbReference>
<dbReference type="InterPro" id="IPR000589">
    <property type="entry name" value="Ribosomal_uS15"/>
</dbReference>
<dbReference type="InterPro" id="IPR005290">
    <property type="entry name" value="Ribosomal_uS15_bac-type"/>
</dbReference>
<dbReference type="InterPro" id="IPR009068">
    <property type="entry name" value="uS15_NS1_RNA-bd_sf"/>
</dbReference>
<dbReference type="NCBIfam" id="TIGR00952">
    <property type="entry name" value="S15_bact"/>
    <property type="match status" value="1"/>
</dbReference>
<dbReference type="PANTHER" id="PTHR23321">
    <property type="entry name" value="RIBOSOMAL PROTEIN S15, BACTERIAL AND ORGANELLAR"/>
    <property type="match status" value="1"/>
</dbReference>
<dbReference type="PANTHER" id="PTHR23321:SF26">
    <property type="entry name" value="SMALL RIBOSOMAL SUBUNIT PROTEIN US15M"/>
    <property type="match status" value="1"/>
</dbReference>
<dbReference type="Pfam" id="PF00312">
    <property type="entry name" value="Ribosomal_S15"/>
    <property type="match status" value="1"/>
</dbReference>
<dbReference type="SMART" id="SM01387">
    <property type="entry name" value="Ribosomal_S15"/>
    <property type="match status" value="1"/>
</dbReference>
<dbReference type="SUPFAM" id="SSF47060">
    <property type="entry name" value="S15/NS1 RNA-binding domain"/>
    <property type="match status" value="1"/>
</dbReference>
<dbReference type="PROSITE" id="PS00362">
    <property type="entry name" value="RIBOSOMAL_S15"/>
    <property type="match status" value="1"/>
</dbReference>
<comment type="subunit">
    <text evidence="1">Part of the 30S ribosomal subunit.</text>
</comment>
<comment type="subcellular location">
    <subcellularLocation>
        <location>Plastid</location>
        <location>Chloroplast</location>
    </subcellularLocation>
</comment>
<comment type="similarity">
    <text evidence="2">Belongs to the universal ribosomal protein uS15 family.</text>
</comment>
<feature type="chain" id="PRO_0000276971" description="Small ribosomal subunit protein uS15c">
    <location>
        <begin position="1"/>
        <end position="90"/>
    </location>
</feature>
<organism>
    <name type="scientific">Daucus carota</name>
    <name type="common">Wild carrot</name>
    <dbReference type="NCBI Taxonomy" id="4039"/>
    <lineage>
        <taxon>Eukaryota</taxon>
        <taxon>Viridiplantae</taxon>
        <taxon>Streptophyta</taxon>
        <taxon>Embryophyta</taxon>
        <taxon>Tracheophyta</taxon>
        <taxon>Spermatophyta</taxon>
        <taxon>Magnoliopsida</taxon>
        <taxon>eudicotyledons</taxon>
        <taxon>Gunneridae</taxon>
        <taxon>Pentapetalae</taxon>
        <taxon>asterids</taxon>
        <taxon>campanulids</taxon>
        <taxon>Apiales</taxon>
        <taxon>Apiaceae</taxon>
        <taxon>Apioideae</taxon>
        <taxon>Scandiceae</taxon>
        <taxon>Daucinae</taxon>
        <taxon>Daucus</taxon>
        <taxon>Daucus sect. Daucus</taxon>
    </lineage>
</organism>